<gene>
    <name evidence="8" type="primary">pyr9</name>
    <name type="ORF">AFUA_6G13945</name>
</gene>
<dbReference type="EC" id="1.-.-.-" evidence="10"/>
<dbReference type="EMBL" id="AAHF01000006">
    <property type="protein sequence ID" value="EBA27372.1"/>
    <property type="molecule type" value="Genomic_DNA"/>
</dbReference>
<dbReference type="RefSeq" id="XP_001481477.1">
    <property type="nucleotide sequence ID" value="XM_001481427.1"/>
</dbReference>
<dbReference type="SMR" id="A4D9R3"/>
<dbReference type="STRING" id="330879.A4D9R3"/>
<dbReference type="GlyCosmos" id="A4D9R3">
    <property type="glycosylation" value="3 sites, No reported glycans"/>
</dbReference>
<dbReference type="EnsemblFungi" id="EBA27372">
    <property type="protein sequence ID" value="EBA27372"/>
    <property type="gene ID" value="AFUA_6G13945"/>
</dbReference>
<dbReference type="GeneID" id="5077234"/>
<dbReference type="KEGG" id="afm:AFUA_6G13945"/>
<dbReference type="VEuPathDB" id="FungiDB:Afu6g13945"/>
<dbReference type="eggNOG" id="KOG0159">
    <property type="taxonomic scope" value="Eukaryota"/>
</dbReference>
<dbReference type="HOGENOM" id="CLU_022195_0_3_1"/>
<dbReference type="InParanoid" id="A4D9R3"/>
<dbReference type="OMA" id="DIHLANG"/>
<dbReference type="OrthoDB" id="1844152at2759"/>
<dbReference type="UniPathway" id="UPA00213"/>
<dbReference type="Proteomes" id="UP000002530">
    <property type="component" value="Chromosome 6"/>
</dbReference>
<dbReference type="GO" id="GO:0016020">
    <property type="term" value="C:membrane"/>
    <property type="evidence" value="ECO:0007669"/>
    <property type="project" value="UniProtKB-SubCell"/>
</dbReference>
<dbReference type="GO" id="GO:0020037">
    <property type="term" value="F:heme binding"/>
    <property type="evidence" value="ECO:0007669"/>
    <property type="project" value="InterPro"/>
</dbReference>
<dbReference type="GO" id="GO:0005506">
    <property type="term" value="F:iron ion binding"/>
    <property type="evidence" value="ECO:0007669"/>
    <property type="project" value="InterPro"/>
</dbReference>
<dbReference type="GO" id="GO:0004497">
    <property type="term" value="F:monooxygenase activity"/>
    <property type="evidence" value="ECO:0007669"/>
    <property type="project" value="UniProtKB-KW"/>
</dbReference>
<dbReference type="GO" id="GO:0016705">
    <property type="term" value="F:oxidoreductase activity, acting on paired donors, with incorporation or reduction of molecular oxygen"/>
    <property type="evidence" value="ECO:0007669"/>
    <property type="project" value="InterPro"/>
</dbReference>
<dbReference type="GO" id="GO:0019748">
    <property type="term" value="P:secondary metabolic process"/>
    <property type="evidence" value="ECO:0007669"/>
    <property type="project" value="UniProtKB-ARBA"/>
</dbReference>
<dbReference type="GO" id="GO:0016114">
    <property type="term" value="P:terpenoid biosynthetic process"/>
    <property type="evidence" value="ECO:0007669"/>
    <property type="project" value="UniProtKB-UniPathway"/>
</dbReference>
<dbReference type="CDD" id="cd11041">
    <property type="entry name" value="CYP503A1-like"/>
    <property type="match status" value="1"/>
</dbReference>
<dbReference type="Gene3D" id="1.10.630.10">
    <property type="entry name" value="Cytochrome P450"/>
    <property type="match status" value="1"/>
</dbReference>
<dbReference type="InterPro" id="IPR001128">
    <property type="entry name" value="Cyt_P450"/>
</dbReference>
<dbReference type="InterPro" id="IPR002403">
    <property type="entry name" value="Cyt_P450_E_grp-IV"/>
</dbReference>
<dbReference type="InterPro" id="IPR036396">
    <property type="entry name" value="Cyt_P450_sf"/>
</dbReference>
<dbReference type="PANTHER" id="PTHR46206">
    <property type="entry name" value="CYTOCHROME P450"/>
    <property type="match status" value="1"/>
</dbReference>
<dbReference type="PANTHER" id="PTHR46206:SF3">
    <property type="entry name" value="P450, PUTATIVE (EUROFUNG)-RELATED"/>
    <property type="match status" value="1"/>
</dbReference>
<dbReference type="Pfam" id="PF00067">
    <property type="entry name" value="p450"/>
    <property type="match status" value="1"/>
</dbReference>
<dbReference type="PRINTS" id="PR00465">
    <property type="entry name" value="EP450IV"/>
</dbReference>
<dbReference type="SUPFAM" id="SSF48264">
    <property type="entry name" value="Cytochrome P450"/>
    <property type="match status" value="1"/>
</dbReference>
<keyword id="KW-0325">Glycoprotein</keyword>
<keyword id="KW-0349">Heme</keyword>
<keyword id="KW-0408">Iron</keyword>
<keyword id="KW-0472">Membrane</keyword>
<keyword id="KW-0479">Metal-binding</keyword>
<keyword id="KW-0503">Monooxygenase</keyword>
<keyword id="KW-0560">Oxidoreductase</keyword>
<keyword id="KW-1185">Reference proteome</keyword>
<keyword id="KW-0812">Transmembrane</keyword>
<keyword id="KW-1133">Transmembrane helix</keyword>
<organism>
    <name type="scientific">Aspergillus fumigatus (strain ATCC MYA-4609 / CBS 101355 / FGSC A1100 / Af293)</name>
    <name type="common">Neosartorya fumigata</name>
    <dbReference type="NCBI Taxonomy" id="330879"/>
    <lineage>
        <taxon>Eukaryota</taxon>
        <taxon>Fungi</taxon>
        <taxon>Dikarya</taxon>
        <taxon>Ascomycota</taxon>
        <taxon>Pezizomycotina</taxon>
        <taxon>Eurotiomycetes</taxon>
        <taxon>Eurotiomycetidae</taxon>
        <taxon>Eurotiales</taxon>
        <taxon>Aspergillaceae</taxon>
        <taxon>Aspergillus</taxon>
        <taxon>Aspergillus subgen. Fumigati</taxon>
    </lineage>
</organism>
<proteinExistence type="evidence at protein level"/>
<accession>A4D9R3</accession>
<sequence length="502" mass="56439">MIRVEDASIGTVWVTCLLAVGLYFIRSRLLSDQFAGFPSVNSRKPWEVLNVFAHRRFQQNGPEYLKAGFAKSPVFGVVTDLGPKLVVSGAFIEDFKDEKLLDHYRAMVEDFMAEVPGFESMFLGNLHNTVLRDVISVITRELDQFTLPLSDEVSTALGDTWSDSPDWTEVTLLPSMLGLIARVSSLIFVGEPLCRDPAWLETVVNFTIVRHQAILALHMCPAVLRPVLHWFLPPCQKLRREIKTARSLINSALEELRKNPPTDRFSSLAWVDAFASGKKYDATMVQLRLANASIHSSADLLAKVLINLCEQPGLIQDLRDEVISVLEENGWRASTLNQLKLLDSVLKESQRLHPITTGTFSRFTRQNIKLTNGTEIPTGTPVMVTNDVAGDAAIYPDPEVFDGYRYLRMREGADKARAPFTTTGQNHLGFGYGKYACPGRFFAATEIKIALCHMLLKYEWRLVKDSPHDMLTSGFASFRDPRARIEVRRRAPDPQEVVLTIK</sequence>
<reference key="1">
    <citation type="journal article" date="2005" name="Nature">
        <title>Genomic sequence of the pathogenic and allergenic filamentous fungus Aspergillus fumigatus.</title>
        <authorList>
            <person name="Nierman W.C."/>
            <person name="Pain A."/>
            <person name="Anderson M.J."/>
            <person name="Wortman J.R."/>
            <person name="Kim H.S."/>
            <person name="Arroyo J."/>
            <person name="Berriman M."/>
            <person name="Abe K."/>
            <person name="Archer D.B."/>
            <person name="Bermejo C."/>
            <person name="Bennett J.W."/>
            <person name="Bowyer P."/>
            <person name="Chen D."/>
            <person name="Collins M."/>
            <person name="Coulsen R."/>
            <person name="Davies R."/>
            <person name="Dyer P.S."/>
            <person name="Farman M.L."/>
            <person name="Fedorova N."/>
            <person name="Fedorova N.D."/>
            <person name="Feldblyum T.V."/>
            <person name="Fischer R."/>
            <person name="Fosker N."/>
            <person name="Fraser A."/>
            <person name="Garcia J.L."/>
            <person name="Garcia M.J."/>
            <person name="Goble A."/>
            <person name="Goldman G.H."/>
            <person name="Gomi K."/>
            <person name="Griffith-Jones S."/>
            <person name="Gwilliam R."/>
            <person name="Haas B.J."/>
            <person name="Haas H."/>
            <person name="Harris D.E."/>
            <person name="Horiuchi H."/>
            <person name="Huang J."/>
            <person name="Humphray S."/>
            <person name="Jimenez J."/>
            <person name="Keller N."/>
            <person name="Khouri H."/>
            <person name="Kitamoto K."/>
            <person name="Kobayashi T."/>
            <person name="Konzack S."/>
            <person name="Kulkarni R."/>
            <person name="Kumagai T."/>
            <person name="Lafton A."/>
            <person name="Latge J.-P."/>
            <person name="Li W."/>
            <person name="Lord A."/>
            <person name="Lu C."/>
            <person name="Majoros W.H."/>
            <person name="May G.S."/>
            <person name="Miller B.L."/>
            <person name="Mohamoud Y."/>
            <person name="Molina M."/>
            <person name="Monod M."/>
            <person name="Mouyna I."/>
            <person name="Mulligan S."/>
            <person name="Murphy L.D."/>
            <person name="O'Neil S."/>
            <person name="Paulsen I."/>
            <person name="Penalva M.A."/>
            <person name="Pertea M."/>
            <person name="Price C."/>
            <person name="Pritchard B.L."/>
            <person name="Quail M.A."/>
            <person name="Rabbinowitsch E."/>
            <person name="Rawlins N."/>
            <person name="Rajandream M.A."/>
            <person name="Reichard U."/>
            <person name="Renauld H."/>
            <person name="Robson G.D."/>
            <person name="Rodriguez de Cordoba S."/>
            <person name="Rodriguez-Pena J.M."/>
            <person name="Ronning C.M."/>
            <person name="Rutter S."/>
            <person name="Salzberg S.L."/>
            <person name="Sanchez M."/>
            <person name="Sanchez-Ferrero J.C."/>
            <person name="Saunders D."/>
            <person name="Seeger K."/>
            <person name="Squares R."/>
            <person name="Squares S."/>
            <person name="Takeuchi M."/>
            <person name="Tekaia F."/>
            <person name="Turner G."/>
            <person name="Vazquez de Aldana C.R."/>
            <person name="Weidman J."/>
            <person name="White O."/>
            <person name="Woodward J.R."/>
            <person name="Yu J.-H."/>
            <person name="Fraser C.M."/>
            <person name="Galagan J.E."/>
            <person name="Asai K."/>
            <person name="Machida M."/>
            <person name="Hall N."/>
            <person name="Barrell B.G."/>
            <person name="Denning D.W."/>
        </authorList>
    </citation>
    <scope>NUCLEOTIDE SEQUENCE [LARGE SCALE GENOMIC DNA]</scope>
    <source>
        <strain>ATCC MYA-4609 / CBS 101355 / FGSC A1100 / Af293</strain>
    </source>
</reference>
<reference key="2">
    <citation type="journal article" date="1995" name="Appl. Environ. Microbiol.">
        <title>Aflavinines and other antiinsectan metabolites from the ascostromata of Eupenicillium crustaceum and related species.</title>
        <authorList>
            <person name="Wang H.J."/>
            <person name="Gloer J.B."/>
            <person name="Wicklow D.T."/>
            <person name="Dowd P.F."/>
        </authorList>
    </citation>
    <scope>BIOTECHNOLOGY</scope>
</reference>
<reference key="3">
    <citation type="journal article" date="2008" name="J. Antibiot.">
        <title>Selectivity of pyripyropene derivatives in inhibition toward acyl-CoA:cholesterol acyltransferase 2 isozyme.</title>
        <authorList>
            <person name="Ohshiro T."/>
            <person name="Ohte S."/>
            <person name="Matsuda D."/>
            <person name="Ohtawa M."/>
            <person name="Nagamitsu T."/>
            <person name="Sunazuka T."/>
            <person name="Harigaya Y."/>
            <person name="Rudel L.L."/>
            <person name="Omura S."/>
            <person name="Tomoda H."/>
        </authorList>
    </citation>
    <scope>BIOTECHNOLOGY</scope>
</reference>
<reference key="4">
    <citation type="journal article" date="2009" name="Biol. Pharm. Bull.">
        <title>Pyripyropenes, fungal sesquiterpenes conjugated with alpha-pyrone and pyridine moieties, exhibits anti-angiogenic activity against human umbilical vein endothelial cells.</title>
        <authorList>
            <person name="Hayashi A."/>
            <person name="Arai M."/>
            <person name="Fujita M."/>
            <person name="Kobayashi M."/>
        </authorList>
    </citation>
    <scope>BIOTECHNOLOGY</scope>
</reference>
<reference key="5">
    <citation type="journal article" date="2010" name="Nat. Chem.">
        <title>Reconstitution of a fungal meroterpenoid biosynthesis reveals the involvement of a novel family of terpene cyclases.</title>
        <authorList>
            <person name="Itoh T."/>
            <person name="Tokunaga K."/>
            <person name="Matsuda Y."/>
            <person name="Fujii I."/>
            <person name="Abe I."/>
            <person name="Ebizuka Y."/>
            <person name="Kushiro T."/>
        </authorList>
    </citation>
    <scope>FUNCTION</scope>
    <scope>CATALYTIC ACTIVITY</scope>
</reference>
<reference key="6">
    <citation type="journal article" date="2011" name="J. Antibiot.">
        <title>Characterization of two cytochrome P450 monooxygenase genes of the pyripyropene biosynthetic gene cluster from Penicillium coprobium.</title>
        <authorList>
            <person name="Hu J."/>
            <person name="Okawa H."/>
            <person name="Yamamoto K."/>
            <person name="Oyama K."/>
            <person name="Mitomi M."/>
            <person name="Anzai H."/>
        </authorList>
    </citation>
    <scope>FUNCTION</scope>
</reference>
<reference key="7">
    <citation type="journal article" date="2014" name="Biotechnol. Biotechnol. Equip.">
        <title>Characterization of two acetyltransferase genes in the pyripyropene biosynthetic gene cluster from Penicillium coprobium.</title>
        <authorList>
            <person name="Hu J."/>
            <person name="Furutani A."/>
            <person name="Yamamoto K."/>
            <person name="Oyama K."/>
            <person name="Mitomi M."/>
            <person name="Anzai H."/>
        </authorList>
    </citation>
    <scope>FUNCTION</scope>
</reference>
<protein>
    <recommendedName>
        <fullName evidence="8">Cytochrome P450 monooxygenase pyr9</fullName>
        <ecNumber evidence="10">1.-.-.-</ecNumber>
    </recommendedName>
    <alternativeName>
        <fullName evidence="8">Pyripyropene synthesis protein 9</fullName>
    </alternativeName>
</protein>
<evidence type="ECO:0000250" key="1">
    <source>
        <dbReference type="UniProtKB" id="P04798"/>
    </source>
</evidence>
<evidence type="ECO:0000255" key="2"/>
<evidence type="ECO:0000255" key="3">
    <source>
        <dbReference type="PROSITE-ProRule" id="PRU00498"/>
    </source>
</evidence>
<evidence type="ECO:0000269" key="4">
    <source>
    </source>
</evidence>
<evidence type="ECO:0000269" key="5">
    <source>
    </source>
</evidence>
<evidence type="ECO:0000269" key="6">
    <source>
    </source>
</evidence>
<evidence type="ECO:0000269" key="7">
    <source>
    </source>
</evidence>
<evidence type="ECO:0000303" key="8">
    <source>
    </source>
</evidence>
<evidence type="ECO:0000305" key="9"/>
<evidence type="ECO:0000305" key="10">
    <source>
    </source>
</evidence>
<evidence type="ECO:0000305" key="11">
    <source>
    </source>
</evidence>
<evidence type="ECO:0000305" key="12">
    <source>
    </source>
</evidence>
<name>PYR9_ASPFU</name>
<comment type="function">
    <text evidence="6 11 12">Cytochrome P450 monooxygenase; part of the gene cluster that mediates the biosynthesis of pyripyropene A, a specific human acyl-coenzyme A:cholesterol acyltransferase 2 inhibitor (PubMed:20861902). The first step of the pathway is the synthesis of nicotinyl-CoA from nicotinic acid by the nicotinic acid-CoA ligase pyr1 (PubMed:20861902). Nicotinyl-CoA is then a substrate of polyketide synthase pyr2 to produce 4-hydroxy-6-(3-pyridinyl)-2H-pyran-2-one (HPPO) which is further prenylated by the polyprenyl transferase pyr6 to yield farnesyl-HPPO (PubMed:20861902). The next steps consist of an epoxidation of farnesyl-HPPO to epoxyfarnesyl-HPPO by FAD-dependent monooxygenase pyr5 and a cyclization of the terpenoid portion by the terpene cyclase pyr4 to yield deacetyl-pyripyropene E (PubMed:20861902). The 2 cytochrome P450 monooxygenases pyr3 and pyr9, and the 2 acetyltransferases pyr7 and pyr8 are involved in the conversion of deacetyl-pyripyropene E into pyripyropene A through several cycles of oxidation and acetylation steps (PubMed:20861902). Pyr7 acetylates deacetyl-pyripyropene E to pyripyropene E which is oxidized to 11-deacetyl-pyripyropene O by pyr3, which is in turn acetylated into pyripyropene O by pyr8 (PubMed:21224862, PubMed:26019565). Pyripyropene O is then oxidized to deacetyl-pyripyropene A by pyr9 (PubMed:21224862). Deacetyl-pyripyropene A is finally acetylated to pyripyropene A by pyr8 (PubMed:26019565).</text>
</comment>
<comment type="cofactor">
    <cofactor evidence="1">
        <name>heme</name>
        <dbReference type="ChEBI" id="CHEBI:30413"/>
    </cofactor>
</comment>
<comment type="pathway">
    <text evidence="6">Secondary metabolite biosynthesis; terpenoid biosynthesis.</text>
</comment>
<comment type="subcellular location">
    <subcellularLocation>
        <location evidence="2">Membrane</location>
        <topology evidence="2">Single-pass membrane protein</topology>
    </subcellularLocation>
</comment>
<comment type="biotechnology">
    <text evidence="4 5 7">Pyripyropene A and its derivatives have very unique characteristics of selectively inhibiting the acyl-coenzyme A:cholesterol acyltransferase 2 (ACAT2) isozyme (PubMed:18997389). Therefore, pyripyropenes are expected to be developed as a new type of anti-atherosclerotic agent (PubMed:18997389). Furthermore, pyripyropenes have been shown to exhibit anti-angiogenic activity against human umbilical vein endothelial cells (PubMed:19571395). Finally, pyripyropene A also exhibits insecticidal properties (PubMed:8534106).</text>
</comment>
<comment type="similarity">
    <text evidence="9">Belongs to the cytochrome P450 family.</text>
</comment>
<feature type="chain" id="PRO_0000436758" description="Cytochrome P450 monooxygenase pyr9">
    <location>
        <begin position="1"/>
        <end position="502"/>
    </location>
</feature>
<feature type="transmembrane region" description="Helical" evidence="2">
    <location>
        <begin position="5"/>
        <end position="25"/>
    </location>
</feature>
<feature type="binding site" description="axial binding residue" evidence="1">
    <location>
        <position position="437"/>
    </location>
    <ligand>
        <name>heme</name>
        <dbReference type="ChEBI" id="CHEBI:30413"/>
    </ligand>
    <ligandPart>
        <name>Fe</name>
        <dbReference type="ChEBI" id="CHEBI:18248"/>
    </ligandPart>
</feature>
<feature type="glycosylation site" description="N-linked (GlcNAc...) asparagine" evidence="3">
    <location>
        <position position="205"/>
    </location>
</feature>
<feature type="glycosylation site" description="N-linked (GlcNAc...) asparagine" evidence="3">
    <location>
        <position position="291"/>
    </location>
</feature>
<feature type="glycosylation site" description="N-linked (GlcNAc...) asparagine" evidence="3">
    <location>
        <position position="372"/>
    </location>
</feature>